<keyword id="KW-0903">Direct protein sequencing</keyword>
<keyword id="KW-0527">Neuropeptide</keyword>
<keyword id="KW-0964">Secreted</keyword>
<proteinExistence type="evidence at protein level"/>
<reference key="1">
    <citation type="journal article" date="1997" name="Peptides">
        <title>Seven tachykinin-related peptides isolated from the brain of the madeira cockroach; evidence for tissue-specific expression of isoforms.</title>
        <authorList>
            <person name="Muren J.E."/>
            <person name="Naessel D.R."/>
        </authorList>
    </citation>
    <scope>PROTEIN SEQUENCE</scope>
    <scope>MASS SPECTROMETRY</scope>
    <source>
        <tissue>Brain</tissue>
    </source>
</reference>
<name>TRPA_RHYMA</name>
<dbReference type="GO" id="GO:0005576">
    <property type="term" value="C:extracellular region"/>
    <property type="evidence" value="ECO:0007669"/>
    <property type="project" value="UniProtKB-SubCell"/>
</dbReference>
<dbReference type="GO" id="GO:0007218">
    <property type="term" value="P:neuropeptide signaling pathway"/>
    <property type="evidence" value="ECO:0007669"/>
    <property type="project" value="UniProtKB-KW"/>
</dbReference>
<comment type="function">
    <text>Myoactive peptide. Increases the amplitude and frequency of spontaneous contractions and tonus of hindgut muscle.</text>
</comment>
<comment type="subcellular location">
    <subcellularLocation>
        <location>Secreted</location>
    </subcellularLocation>
</comment>
<comment type="tissue specificity">
    <text>Brain.</text>
</comment>
<comment type="mass spectrometry" mass="1436.0" method="MALDI" evidence="1"/>
<sequence length="15" mass="1439">SGLDSLSGATFGGNR</sequence>
<protein>
    <recommendedName>
        <fullName>Tachykinin-related peptide 10</fullName>
        <shortName>LemTRP 10</shortName>
    </recommendedName>
</protein>
<accession>P81753</accession>
<feature type="peptide" id="PRO_0000044445" description="Tachykinin-related peptide 10">
    <location>
        <begin position="1"/>
        <end position="15"/>
    </location>
</feature>
<evidence type="ECO:0000269" key="1">
    <source>
    </source>
</evidence>
<organism>
    <name type="scientific">Rhyparobia maderae</name>
    <name type="common">Madeira cockroach</name>
    <name type="synonym">Leucophaea maderae</name>
    <dbReference type="NCBI Taxonomy" id="36963"/>
    <lineage>
        <taxon>Eukaryota</taxon>
        <taxon>Metazoa</taxon>
        <taxon>Ecdysozoa</taxon>
        <taxon>Arthropoda</taxon>
        <taxon>Hexapoda</taxon>
        <taxon>Insecta</taxon>
        <taxon>Pterygota</taxon>
        <taxon>Neoptera</taxon>
        <taxon>Polyneoptera</taxon>
        <taxon>Dictyoptera</taxon>
        <taxon>Blattodea</taxon>
        <taxon>Blaberoidea</taxon>
        <taxon>Blaberidae</taxon>
        <taxon>Oxyhaloinae</taxon>
        <taxon>Rhyparobia</taxon>
    </lineage>
</organism>